<gene>
    <name type="ordered locus">KPK_1978</name>
</gene>
<comment type="similarity">
    <text evidence="1">Belongs to the UPF0260 family.</text>
</comment>
<protein>
    <recommendedName>
        <fullName evidence="1">UPF0260 protein KPK_1978</fullName>
    </recommendedName>
</protein>
<sequence length="148" mass="17291">MSEQPFWQQKTLDEMTDAEWESLCDGCGQCCLHKLMDEDTDEIYFTNVACRQLNIKTCQCRNYERRFEYEPDCIKLTRENLPTFEWLPPTCAYRLLAEGKSLPAWHPLLTGSKAAMHGERISVRHIAVPESTVVDWQDHILNLPDRAR</sequence>
<accession>B5XQ74</accession>
<dbReference type="EMBL" id="CP000964">
    <property type="protein sequence ID" value="ACI09417.1"/>
    <property type="molecule type" value="Genomic_DNA"/>
</dbReference>
<dbReference type="KEGG" id="kpe:KPK_1978"/>
<dbReference type="HOGENOM" id="CLU_109769_0_1_6"/>
<dbReference type="BioCyc" id="KPNE507522:GI0B-1972-MONOMER"/>
<dbReference type="Proteomes" id="UP000001734">
    <property type="component" value="Chromosome"/>
</dbReference>
<dbReference type="HAMAP" id="MF_00676">
    <property type="entry name" value="UPF0260"/>
    <property type="match status" value="1"/>
</dbReference>
<dbReference type="InterPro" id="IPR005358">
    <property type="entry name" value="Puta_zinc/iron-chelating_dom"/>
</dbReference>
<dbReference type="InterPro" id="IPR008228">
    <property type="entry name" value="UCP006173"/>
</dbReference>
<dbReference type="NCBIfam" id="NF003498">
    <property type="entry name" value="PRK05170.1-1"/>
    <property type="match status" value="1"/>
</dbReference>
<dbReference type="NCBIfam" id="NF003501">
    <property type="entry name" value="PRK05170.1-5"/>
    <property type="match status" value="1"/>
</dbReference>
<dbReference type="NCBIfam" id="NF003503">
    <property type="entry name" value="PRK05170.2-1"/>
    <property type="match status" value="1"/>
</dbReference>
<dbReference type="NCBIfam" id="NF003507">
    <property type="entry name" value="PRK05170.2-5"/>
    <property type="match status" value="1"/>
</dbReference>
<dbReference type="PANTHER" id="PTHR37421">
    <property type="entry name" value="UPF0260 PROTEIN YCGN"/>
    <property type="match status" value="1"/>
</dbReference>
<dbReference type="PANTHER" id="PTHR37421:SF1">
    <property type="entry name" value="UPF0260 PROTEIN YCGN"/>
    <property type="match status" value="1"/>
</dbReference>
<dbReference type="Pfam" id="PF03692">
    <property type="entry name" value="CxxCxxCC"/>
    <property type="match status" value="1"/>
</dbReference>
<dbReference type="PIRSF" id="PIRSF006173">
    <property type="entry name" value="UCP006173"/>
    <property type="match status" value="1"/>
</dbReference>
<proteinExistence type="inferred from homology"/>
<reference key="1">
    <citation type="journal article" date="2008" name="PLoS Genet.">
        <title>Complete genome sequence of the N2-fixing broad host range endophyte Klebsiella pneumoniae 342 and virulence predictions verified in mice.</title>
        <authorList>
            <person name="Fouts D.E."/>
            <person name="Tyler H.L."/>
            <person name="DeBoy R.T."/>
            <person name="Daugherty S."/>
            <person name="Ren Q."/>
            <person name="Badger J.H."/>
            <person name="Durkin A.S."/>
            <person name="Huot H."/>
            <person name="Shrivastava S."/>
            <person name="Kothari S."/>
            <person name="Dodson R.J."/>
            <person name="Mohamoud Y."/>
            <person name="Khouri H."/>
            <person name="Roesch L.F.W."/>
            <person name="Krogfelt K.A."/>
            <person name="Struve C."/>
            <person name="Triplett E.W."/>
            <person name="Methe B.A."/>
        </authorList>
    </citation>
    <scope>NUCLEOTIDE SEQUENCE [LARGE SCALE GENOMIC DNA]</scope>
    <source>
        <strain>342</strain>
    </source>
</reference>
<organism>
    <name type="scientific">Klebsiella pneumoniae (strain 342)</name>
    <dbReference type="NCBI Taxonomy" id="507522"/>
    <lineage>
        <taxon>Bacteria</taxon>
        <taxon>Pseudomonadati</taxon>
        <taxon>Pseudomonadota</taxon>
        <taxon>Gammaproteobacteria</taxon>
        <taxon>Enterobacterales</taxon>
        <taxon>Enterobacteriaceae</taxon>
        <taxon>Klebsiella/Raoultella group</taxon>
        <taxon>Klebsiella</taxon>
        <taxon>Klebsiella pneumoniae complex</taxon>
    </lineage>
</organism>
<name>Y1978_KLEP3</name>
<feature type="chain" id="PRO_1000131622" description="UPF0260 protein KPK_1978">
    <location>
        <begin position="1"/>
        <end position="148"/>
    </location>
</feature>
<evidence type="ECO:0000255" key="1">
    <source>
        <dbReference type="HAMAP-Rule" id="MF_00676"/>
    </source>
</evidence>